<protein>
    <recommendedName>
        <fullName>Voltage-dependent L-type calcium channel subunit beta-2</fullName>
        <shortName>CAB2</shortName>
    </recommendedName>
    <alternativeName>
        <fullName>Calcium channel voltage-dependent subunit beta 2</fullName>
    </alternativeName>
</protein>
<evidence type="ECO:0000250" key="1"/>
<evidence type="ECO:0000250" key="2">
    <source>
        <dbReference type="UniProtKB" id="Q08289"/>
    </source>
</evidence>
<evidence type="ECO:0000250" key="3">
    <source>
        <dbReference type="UniProtKB" id="Q8CC27"/>
    </source>
</evidence>
<evidence type="ECO:0000250" key="4">
    <source>
        <dbReference type="UniProtKB" id="Q8VGC3"/>
    </source>
</evidence>
<evidence type="ECO:0000255" key="5">
    <source>
        <dbReference type="PROSITE-ProRule" id="PRU00192"/>
    </source>
</evidence>
<evidence type="ECO:0000256" key="6">
    <source>
        <dbReference type="SAM" id="MobiDB-lite"/>
    </source>
</evidence>
<evidence type="ECO:0000305" key="7"/>
<dbReference type="EMBL" id="AF174417">
    <property type="protein sequence ID" value="AAF26681.1"/>
    <property type="molecule type" value="mRNA"/>
</dbReference>
<dbReference type="RefSeq" id="NP_786983.1">
    <property type="nucleotide sequence ID" value="NM_175789.2"/>
</dbReference>
<dbReference type="SMR" id="Q9MZL5"/>
<dbReference type="FunCoup" id="Q9MZL5">
    <property type="interactions" value="1834"/>
</dbReference>
<dbReference type="IntAct" id="Q9MZL5">
    <property type="interactions" value="2"/>
</dbReference>
<dbReference type="STRING" id="9913.ENSBTAP00000069538"/>
<dbReference type="BindingDB" id="Q9MZL5"/>
<dbReference type="PaxDb" id="9913-ENSBTAP00000029344"/>
<dbReference type="Ensembl" id="ENSBTAT00000029344.4">
    <property type="protein sequence ID" value="ENSBTAP00000029344.3"/>
    <property type="gene ID" value="ENSBTAG00000022000.5"/>
</dbReference>
<dbReference type="GeneID" id="327667"/>
<dbReference type="KEGG" id="bta:327667"/>
<dbReference type="CTD" id="783"/>
<dbReference type="VEuPathDB" id="HostDB:ENSBTAG00000022000"/>
<dbReference type="VGNC" id="VGNC:26684">
    <property type="gene designation" value="CACNB2"/>
</dbReference>
<dbReference type="eggNOG" id="KOG3812">
    <property type="taxonomic scope" value="Eukaryota"/>
</dbReference>
<dbReference type="GeneTree" id="ENSGT00950000182837"/>
<dbReference type="HOGENOM" id="CLU_021995_3_0_1"/>
<dbReference type="InParanoid" id="Q9MZL5"/>
<dbReference type="OrthoDB" id="5962384at2759"/>
<dbReference type="TreeFam" id="TF316195"/>
<dbReference type="Reactome" id="R-BTA-112308">
    <property type="pathway name" value="Presynaptic depolarization and calcium channel opening"/>
</dbReference>
<dbReference type="Reactome" id="R-BTA-422356">
    <property type="pathway name" value="Regulation of insulin secretion"/>
</dbReference>
<dbReference type="Reactome" id="R-BTA-5576892">
    <property type="pathway name" value="Phase 0 - rapid depolarisation"/>
</dbReference>
<dbReference type="Reactome" id="R-BTA-5576893">
    <property type="pathway name" value="Phase 2 - plateau phase"/>
</dbReference>
<dbReference type="Proteomes" id="UP000009136">
    <property type="component" value="Chromosome 13"/>
</dbReference>
<dbReference type="Bgee" id="ENSBTAG00000022000">
    <property type="expression patterns" value="Expressed in cardiac ventricle and 103 other cell types or tissues"/>
</dbReference>
<dbReference type="GO" id="GO:1990454">
    <property type="term" value="C:L-type voltage-gated calcium channel complex"/>
    <property type="evidence" value="ECO:0000353"/>
    <property type="project" value="ComplexPortal"/>
</dbReference>
<dbReference type="GO" id="GO:0045202">
    <property type="term" value="C:synapse"/>
    <property type="evidence" value="ECO:0007669"/>
    <property type="project" value="GOC"/>
</dbReference>
<dbReference type="GO" id="GO:0008331">
    <property type="term" value="F:high voltage-gated calcium channel activity"/>
    <property type="evidence" value="ECO:0000318"/>
    <property type="project" value="GO_Central"/>
</dbReference>
<dbReference type="GO" id="GO:0070588">
    <property type="term" value="P:calcium ion transmembrane transport"/>
    <property type="evidence" value="ECO:0000250"/>
    <property type="project" value="ComplexPortal"/>
</dbReference>
<dbReference type="GO" id="GO:0006816">
    <property type="term" value="P:calcium ion transport"/>
    <property type="evidence" value="ECO:0000318"/>
    <property type="project" value="GO_Central"/>
</dbReference>
<dbReference type="GO" id="GO:0007268">
    <property type="term" value="P:chemical synaptic transmission"/>
    <property type="evidence" value="ECO:0000318"/>
    <property type="project" value="GO_Central"/>
</dbReference>
<dbReference type="GO" id="GO:0045933">
    <property type="term" value="P:positive regulation of muscle contraction"/>
    <property type="evidence" value="ECO:0000303"/>
    <property type="project" value="ComplexPortal"/>
</dbReference>
<dbReference type="CDD" id="cd12040">
    <property type="entry name" value="SH3_CACNB2"/>
    <property type="match status" value="1"/>
</dbReference>
<dbReference type="FunFam" id="2.30.30.40:FF:000015">
    <property type="entry name" value="Voltage-dependent L-type calcium channel subunit beta-2"/>
    <property type="match status" value="1"/>
</dbReference>
<dbReference type="FunFam" id="3.40.50.300:FF:000023">
    <property type="entry name" value="Voltage-dependent L-type calcium channel subunit beta-2"/>
    <property type="match status" value="1"/>
</dbReference>
<dbReference type="Gene3D" id="3.40.50.300">
    <property type="entry name" value="P-loop containing nucleotide triphosphate hydrolases"/>
    <property type="match status" value="1"/>
</dbReference>
<dbReference type="Gene3D" id="2.30.30.40">
    <property type="entry name" value="SH3 Domains"/>
    <property type="match status" value="1"/>
</dbReference>
<dbReference type="InterPro" id="IPR046937">
    <property type="entry name" value="CAB1-4_N_A-dom"/>
</dbReference>
<dbReference type="InterPro" id="IPR035605">
    <property type="entry name" value="CACNB2_SH3"/>
</dbReference>
<dbReference type="InterPro" id="IPR008145">
    <property type="entry name" value="GK/Ca_channel_bsu"/>
</dbReference>
<dbReference type="InterPro" id="IPR027417">
    <property type="entry name" value="P-loop_NTPase"/>
</dbReference>
<dbReference type="InterPro" id="IPR036028">
    <property type="entry name" value="SH3-like_dom_sf"/>
</dbReference>
<dbReference type="InterPro" id="IPR001452">
    <property type="entry name" value="SH3_domain"/>
</dbReference>
<dbReference type="InterPro" id="IPR005444">
    <property type="entry name" value="VDCC_L_b2su"/>
</dbReference>
<dbReference type="InterPro" id="IPR000584">
    <property type="entry name" value="VDCC_L_bsu"/>
</dbReference>
<dbReference type="PANTHER" id="PTHR11824">
    <property type="entry name" value="VOLTAGE-DEPENDENT CALCIUM CHANNEL BETA SUBUNIT"/>
    <property type="match status" value="1"/>
</dbReference>
<dbReference type="Pfam" id="PF00625">
    <property type="entry name" value="Guanylate_kin"/>
    <property type="match status" value="1"/>
</dbReference>
<dbReference type="Pfam" id="PF12052">
    <property type="entry name" value="VGCC_beta4Aa_N"/>
    <property type="match status" value="1"/>
</dbReference>
<dbReference type="PRINTS" id="PR01626">
    <property type="entry name" value="LCACHANNELB"/>
</dbReference>
<dbReference type="PRINTS" id="PR01628">
    <property type="entry name" value="LCACHANNELB2"/>
</dbReference>
<dbReference type="SMART" id="SM00072">
    <property type="entry name" value="GuKc"/>
    <property type="match status" value="1"/>
</dbReference>
<dbReference type="SMART" id="SM00326">
    <property type="entry name" value="SH3"/>
    <property type="match status" value="1"/>
</dbReference>
<dbReference type="SUPFAM" id="SSF52540">
    <property type="entry name" value="P-loop containing nucleoside triphosphate hydrolases"/>
    <property type="match status" value="1"/>
</dbReference>
<dbReference type="SUPFAM" id="SSF50044">
    <property type="entry name" value="SH3-domain"/>
    <property type="match status" value="1"/>
</dbReference>
<dbReference type="PROSITE" id="PS50002">
    <property type="entry name" value="SH3"/>
    <property type="match status" value="1"/>
</dbReference>
<sequence length="603" mass="67842">MQCCGLVHRRRARVSYGSADSYTSRPSDSDVSLEEDREAVRREAERQAQAQLEKAKTKPVAFAVRTNVSYSAAHEDDVPVPGMAISFEAKDFLHVKEKFNNDWWIGRLVKEGCEIGFIPSPVKLENMRLQHEQRAKQGKFYSSKSGGNSSSSLGDIVPSSRKSTPPSSAIDIDATGLDAEDNDIPANHRSPKPSANSVTSPHSKEKRMPFFKKTEHTPPYDVVPSMRPVVLVGPSLKGYEVTDMMQKALFDFLKHRFEGRISITRVTADISLAKRSVLNNPSKHAIIERSNTRSSLAEVQSEIERIFELARTLQLVVLDADTINHPAQLSKTSLAPIIVYVKISSPKVLQRLIKSRGKSQAKHLNVQMVAADKLAQCPPELFDVILDENQLEDACEHLADYLEAYWKATHPPSSSLPNPLLSRTLATSTLPVSPTLASNSQGSQGDQRTDRGAPGRSASQAEEEHCPEPVKKAQHRSSTQHHNHRSGTSRGLSRQETLDSETQESRDSAYAEPKEEYSHEHADHYAPHRDHNHREEPHGGGEHRHREPRHRSRDPDREQDHNESNKQRSRHKSKDRYCDKDGEGLSRRRNEAADWNRDVYIRQ</sequence>
<comment type="function">
    <text evidence="2 3 4">Beta subunit of voltage-dependent calcium channels which contributes to the function of the calcium channel by increasing peak calcium current (By similarity). Plays a role in shifting voltage dependencies of activation and inactivation of the channel. May modulate G protein inhibition (By similarity). May contribute to beta-adrenergic augmentation of Ca(2+) influx in cardiomyocytes, thereby regulating increases in heart rate and contractile force (By similarity). Involved in membrane targeting of the alpha-1 subunit CACNA1C (By similarity).</text>
</comment>
<comment type="subunit">
    <text evidence="2 4">Component of a calcium channel complex consisting of a pore-forming alpha subunit (CACNA1S) and the ancillary subunits CACNB1 or CACNB2, CACNG1 and CACNA2D1. The channel complex contains alpha, beta, gamma and delta subunits in a 1:1:1:1 ratio, i.e. it contains either CACNB1 or CACNB2. Interacts with CACNA1C (By similarity). Interacts with RRAD; interaction may be involved in beta-adrenergic regulation of heart rate and contractile force (By similarity). Interaction with RRAD regulates the trafficking of CACNA1C to the cell membrane. Interacts with TMIGD2 (By similarity). Interacts with CAMK2D. Interacts with CBARP (By similarity). Interacts with CAMK2A (By similarity).</text>
</comment>
<comment type="subcellular location">
    <subcellularLocation>
        <location evidence="1">Cell membrane</location>
        <location evidence="1">Sarcolemma</location>
        <topology evidence="1">Peripheral membrane protein</topology>
        <orientation evidence="1">Cytoplasmic side</orientation>
    </subcellularLocation>
</comment>
<comment type="PTM">
    <text evidence="1">Regulated through phosphorylation at Thr-497 by CaMK2D.</text>
</comment>
<comment type="similarity">
    <text evidence="7">Belongs to the calcium channel beta subunit family.</text>
</comment>
<name>CACB2_BOVIN</name>
<feature type="chain" id="PRO_0000144050" description="Voltage-dependent L-type calcium channel subunit beta-2">
    <location>
        <begin position="1"/>
        <end position="603"/>
    </location>
</feature>
<feature type="domain" description="SH3" evidence="5">
    <location>
        <begin position="59"/>
        <end position="128"/>
    </location>
</feature>
<feature type="region of interest" description="Disordered" evidence="6">
    <location>
        <begin position="135"/>
        <end position="206"/>
    </location>
</feature>
<feature type="region of interest" description="Disordered" evidence="6">
    <location>
        <begin position="432"/>
        <end position="603"/>
    </location>
</feature>
<feature type="compositionally biased region" description="Low complexity" evidence="6">
    <location>
        <begin position="142"/>
        <end position="154"/>
    </location>
</feature>
<feature type="compositionally biased region" description="Polar residues" evidence="6">
    <location>
        <begin position="432"/>
        <end position="446"/>
    </location>
</feature>
<feature type="compositionally biased region" description="Basic and acidic residues" evidence="6">
    <location>
        <begin position="462"/>
        <end position="471"/>
    </location>
</feature>
<feature type="compositionally biased region" description="Basic residues" evidence="6">
    <location>
        <begin position="472"/>
        <end position="487"/>
    </location>
</feature>
<feature type="compositionally biased region" description="Basic and acidic residues" evidence="6">
    <location>
        <begin position="503"/>
        <end position="545"/>
    </location>
</feature>
<feature type="compositionally biased region" description="Basic and acidic residues" evidence="6">
    <location>
        <begin position="553"/>
        <end position="566"/>
    </location>
</feature>
<feature type="compositionally biased region" description="Basic and acidic residues" evidence="6">
    <location>
        <begin position="575"/>
        <end position="603"/>
    </location>
</feature>
<feature type="site" description="Required for CaMK2D-binding" evidence="1">
    <location>
        <position position="492"/>
    </location>
</feature>
<feature type="modified residue" description="Phosphoserine" evidence="4">
    <location>
        <position position="149"/>
    </location>
</feature>
<feature type="modified residue" description="Phosphoserine" evidence="3">
    <location>
        <position position="152"/>
    </location>
</feature>
<feature type="modified residue" description="Phosphoserine" evidence="3">
    <location>
        <position position="163"/>
    </location>
</feature>
<feature type="modified residue" description="Phosphoserine" evidence="3">
    <location>
        <position position="493"/>
    </location>
</feature>
<feature type="modified residue" description="Phosphothreonine; by CaMK2D" evidence="4">
    <location>
        <position position="497"/>
    </location>
</feature>
<keyword id="KW-0106">Calcium</keyword>
<keyword id="KW-0107">Calcium channel</keyword>
<keyword id="KW-0109">Calcium transport</keyword>
<keyword id="KW-1003">Cell membrane</keyword>
<keyword id="KW-0407">Ion channel</keyword>
<keyword id="KW-0406">Ion transport</keyword>
<keyword id="KW-0472">Membrane</keyword>
<keyword id="KW-0597">Phosphoprotein</keyword>
<keyword id="KW-1185">Reference proteome</keyword>
<keyword id="KW-0728">SH3 domain</keyword>
<keyword id="KW-0813">Transport</keyword>
<keyword id="KW-0851">Voltage-gated channel</keyword>
<gene>
    <name type="primary">CACNB2</name>
</gene>
<accession>Q9MZL5</accession>
<organism>
    <name type="scientific">Bos taurus</name>
    <name type="common">Bovine</name>
    <dbReference type="NCBI Taxonomy" id="9913"/>
    <lineage>
        <taxon>Eukaryota</taxon>
        <taxon>Metazoa</taxon>
        <taxon>Chordata</taxon>
        <taxon>Craniata</taxon>
        <taxon>Vertebrata</taxon>
        <taxon>Euteleostomi</taxon>
        <taxon>Mammalia</taxon>
        <taxon>Eutheria</taxon>
        <taxon>Laurasiatheria</taxon>
        <taxon>Artiodactyla</taxon>
        <taxon>Ruminantia</taxon>
        <taxon>Pecora</taxon>
        <taxon>Bovidae</taxon>
        <taxon>Bovinae</taxon>
        <taxon>Bos</taxon>
    </lineage>
</organism>
<reference key="1">
    <citation type="journal article" date="2000" name="J. Neurosci.">
        <title>Coexpression of cloned alpha(1B), beta(2a), and alpha(2)/delta subunits produces non-inactivating calcium currents similar to those found in bovine chromaffin cells.</title>
        <authorList>
            <person name="Cahill A.L."/>
            <person name="Hurley J.H."/>
            <person name="Fox A.P."/>
        </authorList>
    </citation>
    <scope>NUCLEOTIDE SEQUENCE [MRNA]</scope>
</reference>
<proteinExistence type="evidence at transcript level"/>